<reference key="1">
    <citation type="journal article" date="1997" name="Nature">
        <title>The nucleotide sequence of Saccharomyces cerevisiae chromosome IV.</title>
        <authorList>
            <person name="Jacq C."/>
            <person name="Alt-Moerbe J."/>
            <person name="Andre B."/>
            <person name="Arnold W."/>
            <person name="Bahr A."/>
            <person name="Ballesta J.P.G."/>
            <person name="Bargues M."/>
            <person name="Baron L."/>
            <person name="Becker A."/>
            <person name="Biteau N."/>
            <person name="Bloecker H."/>
            <person name="Blugeon C."/>
            <person name="Boskovic J."/>
            <person name="Brandt P."/>
            <person name="Brueckner M."/>
            <person name="Buitrago M.J."/>
            <person name="Coster F."/>
            <person name="Delaveau T."/>
            <person name="del Rey F."/>
            <person name="Dujon B."/>
            <person name="Eide L.G."/>
            <person name="Garcia-Cantalejo J.M."/>
            <person name="Goffeau A."/>
            <person name="Gomez-Peris A."/>
            <person name="Granotier C."/>
            <person name="Hanemann V."/>
            <person name="Hankeln T."/>
            <person name="Hoheisel J.D."/>
            <person name="Jaeger W."/>
            <person name="Jimenez A."/>
            <person name="Jonniaux J.-L."/>
            <person name="Kraemer C."/>
            <person name="Kuester H."/>
            <person name="Laamanen P."/>
            <person name="Legros Y."/>
            <person name="Louis E.J."/>
            <person name="Moeller-Rieker S."/>
            <person name="Monnet A."/>
            <person name="Moro M."/>
            <person name="Mueller-Auer S."/>
            <person name="Nussbaumer B."/>
            <person name="Paricio N."/>
            <person name="Paulin L."/>
            <person name="Perea J."/>
            <person name="Perez-Alonso M."/>
            <person name="Perez-Ortin J.E."/>
            <person name="Pohl T.M."/>
            <person name="Prydz H."/>
            <person name="Purnelle B."/>
            <person name="Rasmussen S.W."/>
            <person name="Remacha M.A."/>
            <person name="Revuelta J.L."/>
            <person name="Rieger M."/>
            <person name="Salom D."/>
            <person name="Saluz H.P."/>
            <person name="Saiz J.E."/>
            <person name="Saren A.-M."/>
            <person name="Schaefer M."/>
            <person name="Scharfe M."/>
            <person name="Schmidt E.R."/>
            <person name="Schneider C."/>
            <person name="Scholler P."/>
            <person name="Schwarz S."/>
            <person name="Soler-Mira A."/>
            <person name="Urrestarazu L.A."/>
            <person name="Verhasselt P."/>
            <person name="Vissers S."/>
            <person name="Voet M."/>
            <person name="Volckaert G."/>
            <person name="Wagner G."/>
            <person name="Wambutt R."/>
            <person name="Wedler E."/>
            <person name="Wedler H."/>
            <person name="Woelfl S."/>
            <person name="Harris D.E."/>
            <person name="Bowman S."/>
            <person name="Brown D."/>
            <person name="Churcher C.M."/>
            <person name="Connor R."/>
            <person name="Dedman K."/>
            <person name="Gentles S."/>
            <person name="Hamlin N."/>
            <person name="Hunt S."/>
            <person name="Jones L."/>
            <person name="McDonald S."/>
            <person name="Murphy L.D."/>
            <person name="Niblett D."/>
            <person name="Odell C."/>
            <person name="Oliver K."/>
            <person name="Rajandream M.A."/>
            <person name="Richards C."/>
            <person name="Shore L."/>
            <person name="Walsh S.V."/>
            <person name="Barrell B.G."/>
            <person name="Dietrich F.S."/>
            <person name="Mulligan J.T."/>
            <person name="Allen E."/>
            <person name="Araujo R."/>
            <person name="Aviles E."/>
            <person name="Berno A."/>
            <person name="Carpenter J."/>
            <person name="Chen E."/>
            <person name="Cherry J.M."/>
            <person name="Chung E."/>
            <person name="Duncan M."/>
            <person name="Hunicke-Smith S."/>
            <person name="Hyman R.W."/>
            <person name="Komp C."/>
            <person name="Lashkari D."/>
            <person name="Lew H."/>
            <person name="Lin D."/>
            <person name="Mosedale D."/>
            <person name="Nakahara K."/>
            <person name="Namath A."/>
            <person name="Oefner P."/>
            <person name="Oh C."/>
            <person name="Petel F.X."/>
            <person name="Roberts D."/>
            <person name="Schramm S."/>
            <person name="Schroeder M."/>
            <person name="Shogren T."/>
            <person name="Shroff N."/>
            <person name="Winant A."/>
            <person name="Yelton M.A."/>
            <person name="Botstein D."/>
            <person name="Davis R.W."/>
            <person name="Johnston M."/>
            <person name="Andrews S."/>
            <person name="Brinkman R."/>
            <person name="Cooper J."/>
            <person name="Ding H."/>
            <person name="Du Z."/>
            <person name="Favello A."/>
            <person name="Fulton L."/>
            <person name="Gattung S."/>
            <person name="Greco T."/>
            <person name="Hallsworth K."/>
            <person name="Hawkins J."/>
            <person name="Hillier L.W."/>
            <person name="Jier M."/>
            <person name="Johnson D."/>
            <person name="Johnston L."/>
            <person name="Kirsten J."/>
            <person name="Kucaba T."/>
            <person name="Langston Y."/>
            <person name="Latreille P."/>
            <person name="Le T."/>
            <person name="Mardis E."/>
            <person name="Menezes S."/>
            <person name="Miller N."/>
            <person name="Nhan M."/>
            <person name="Pauley A."/>
            <person name="Peluso D."/>
            <person name="Rifkin L."/>
            <person name="Riles L."/>
            <person name="Taich A."/>
            <person name="Trevaskis E."/>
            <person name="Vignati D."/>
            <person name="Wilcox L."/>
            <person name="Wohldman P."/>
            <person name="Vaudin M."/>
            <person name="Wilson R."/>
            <person name="Waterston R."/>
            <person name="Albermann K."/>
            <person name="Hani J."/>
            <person name="Heumann K."/>
            <person name="Kleine K."/>
            <person name="Mewes H.-W."/>
            <person name="Zollner A."/>
            <person name="Zaccaria P."/>
        </authorList>
    </citation>
    <scope>NUCLEOTIDE SEQUENCE [LARGE SCALE GENOMIC DNA]</scope>
    <source>
        <strain>ATCC 204508 / S288c</strain>
    </source>
</reference>
<reference key="2">
    <citation type="journal article" date="2014" name="G3 (Bethesda)">
        <title>The reference genome sequence of Saccharomyces cerevisiae: Then and now.</title>
        <authorList>
            <person name="Engel S.R."/>
            <person name="Dietrich F.S."/>
            <person name="Fisk D.G."/>
            <person name="Binkley G."/>
            <person name="Balakrishnan R."/>
            <person name="Costanzo M.C."/>
            <person name="Dwight S.S."/>
            <person name="Hitz B.C."/>
            <person name="Karra K."/>
            <person name="Nash R.S."/>
            <person name="Weng S."/>
            <person name="Wong E.D."/>
            <person name="Lloyd P."/>
            <person name="Skrzypek M.S."/>
            <person name="Miyasato S.R."/>
            <person name="Simison M."/>
            <person name="Cherry J.M."/>
        </authorList>
    </citation>
    <scope>GENOME REANNOTATION</scope>
    <source>
        <strain>ATCC 204508 / S288c</strain>
    </source>
</reference>
<reference key="3">
    <citation type="journal article" date="2002" name="Genome Res.">
        <title>Parallel identification of new genes in Saccharomyces cerevisiae.</title>
        <authorList>
            <person name="Oshiro G."/>
            <person name="Wodicka L.M."/>
            <person name="Washburn M.P."/>
            <person name="Yates J.R. III"/>
            <person name="Lockhart D.J."/>
            <person name="Winzeler E.A."/>
        </authorList>
    </citation>
    <scope>IDENTIFICATION BY MASS SPECTROMETRY</scope>
</reference>
<keyword id="KW-1185">Reference proteome</keyword>
<sequence>MGSMILDITGNSMSAIVKVVSNIIRPLVLKNFII</sequence>
<dbReference type="EMBL" id="U28373">
    <property type="status" value="NOT_ANNOTATED_CDS"/>
    <property type="molecule type" value="Genomic_DNA"/>
</dbReference>
<dbReference type="EMBL" id="BK006938">
    <property type="status" value="NOT_ANNOTATED_CDS"/>
    <property type="molecule type" value="Genomic_DNA"/>
</dbReference>
<dbReference type="STRING" id="4932.YDR371C-A"/>
<dbReference type="PaxDb" id="4932-YDR371C-A"/>
<dbReference type="EnsemblFungi" id="YDR371C-A_mRNA">
    <property type="protein sequence ID" value="YDR371C-A"/>
    <property type="gene ID" value="YDR371C-A"/>
</dbReference>
<dbReference type="AGR" id="SGD:S000028822"/>
<dbReference type="SGD" id="S000028822">
    <property type="gene designation" value="YDR371C-A"/>
</dbReference>
<dbReference type="HOGENOM" id="CLU_3377400_0_0_1"/>
<dbReference type="InParanoid" id="P0C5M1"/>
<dbReference type="PRO" id="PR:P0C5M1"/>
<dbReference type="Proteomes" id="UP000002311">
    <property type="component" value="Chromosome IV"/>
</dbReference>
<protein>
    <recommendedName>
        <fullName>Uncharacterized protein YDR371C-A</fullName>
    </recommendedName>
</protein>
<accession>P0C5M1</accession>
<proteinExistence type="evidence at protein level"/>
<organism>
    <name type="scientific">Saccharomyces cerevisiae (strain ATCC 204508 / S288c)</name>
    <name type="common">Baker's yeast</name>
    <dbReference type="NCBI Taxonomy" id="559292"/>
    <lineage>
        <taxon>Eukaryota</taxon>
        <taxon>Fungi</taxon>
        <taxon>Dikarya</taxon>
        <taxon>Ascomycota</taxon>
        <taxon>Saccharomycotina</taxon>
        <taxon>Saccharomycetes</taxon>
        <taxon>Saccharomycetales</taxon>
        <taxon>Saccharomycetaceae</taxon>
        <taxon>Saccharomyces</taxon>
    </lineage>
</organism>
<feature type="chain" id="PRO_0000309019" description="Uncharacterized protein YDR371C-A">
    <location>
        <begin position="1"/>
        <end position="34"/>
    </location>
</feature>
<name>YD371_YEAST</name>
<gene>
    <name type="ordered locus">YDR371C-A</name>
</gene>